<reference key="1">
    <citation type="submission" date="2006-12" db="EMBL/GenBank/DDBJ databases">
        <title>Complete sequence of chromosome 1 of Acidovorax sp. JS42.</title>
        <authorList>
            <person name="Copeland A."/>
            <person name="Lucas S."/>
            <person name="Lapidus A."/>
            <person name="Barry K."/>
            <person name="Detter J.C."/>
            <person name="Glavina del Rio T."/>
            <person name="Dalin E."/>
            <person name="Tice H."/>
            <person name="Pitluck S."/>
            <person name="Chertkov O."/>
            <person name="Brettin T."/>
            <person name="Bruce D."/>
            <person name="Han C."/>
            <person name="Tapia R."/>
            <person name="Gilna P."/>
            <person name="Schmutz J."/>
            <person name="Larimer F."/>
            <person name="Land M."/>
            <person name="Hauser L."/>
            <person name="Kyrpides N."/>
            <person name="Kim E."/>
            <person name="Stahl D."/>
            <person name="Richardson P."/>
        </authorList>
    </citation>
    <scope>NUCLEOTIDE SEQUENCE [LARGE SCALE GENOMIC DNA]</scope>
    <source>
        <strain>JS42</strain>
    </source>
</reference>
<feature type="chain" id="PRO_1000064024" description="2,3-bisphosphoglycerate-dependent phosphoglycerate mutase">
    <location>
        <begin position="1"/>
        <end position="247"/>
    </location>
</feature>
<feature type="active site" description="Tele-phosphohistidine intermediate" evidence="1">
    <location>
        <position position="9"/>
    </location>
</feature>
<feature type="active site" description="Proton donor/acceptor" evidence="1">
    <location>
        <position position="87"/>
    </location>
</feature>
<feature type="binding site" evidence="1">
    <location>
        <begin position="8"/>
        <end position="15"/>
    </location>
    <ligand>
        <name>substrate</name>
    </ligand>
</feature>
<feature type="binding site" evidence="1">
    <location>
        <begin position="21"/>
        <end position="22"/>
    </location>
    <ligand>
        <name>substrate</name>
    </ligand>
</feature>
<feature type="binding site" evidence="1">
    <location>
        <position position="60"/>
    </location>
    <ligand>
        <name>substrate</name>
    </ligand>
</feature>
<feature type="binding site" evidence="1">
    <location>
        <begin position="87"/>
        <end position="90"/>
    </location>
    <ligand>
        <name>substrate</name>
    </ligand>
</feature>
<feature type="binding site" evidence="1">
    <location>
        <position position="98"/>
    </location>
    <ligand>
        <name>substrate</name>
    </ligand>
</feature>
<feature type="binding site" evidence="1">
    <location>
        <begin position="114"/>
        <end position="115"/>
    </location>
    <ligand>
        <name>substrate</name>
    </ligand>
</feature>
<feature type="binding site" evidence="1">
    <location>
        <begin position="183"/>
        <end position="184"/>
    </location>
    <ligand>
        <name>substrate</name>
    </ligand>
</feature>
<feature type="site" description="Transition state stabilizer" evidence="1">
    <location>
        <position position="182"/>
    </location>
</feature>
<gene>
    <name evidence="1" type="primary">gpmA</name>
    <name type="ordered locus">Ajs_3505</name>
</gene>
<protein>
    <recommendedName>
        <fullName evidence="1">2,3-bisphosphoglycerate-dependent phosphoglycerate mutase</fullName>
        <shortName evidence="1">BPG-dependent PGAM</shortName>
        <shortName evidence="1">PGAM</shortName>
        <shortName evidence="1">Phosphoglyceromutase</shortName>
        <shortName evidence="1">dPGM</shortName>
        <ecNumber evidence="1">5.4.2.11</ecNumber>
    </recommendedName>
</protein>
<dbReference type="EC" id="5.4.2.11" evidence="1"/>
<dbReference type="EMBL" id="CP000539">
    <property type="protein sequence ID" value="ABM43618.1"/>
    <property type="molecule type" value="Genomic_DNA"/>
</dbReference>
<dbReference type="SMR" id="A1WBJ3"/>
<dbReference type="STRING" id="232721.Ajs_3505"/>
<dbReference type="KEGG" id="ajs:Ajs_3505"/>
<dbReference type="eggNOG" id="COG0588">
    <property type="taxonomic scope" value="Bacteria"/>
</dbReference>
<dbReference type="HOGENOM" id="CLU_033323_1_1_4"/>
<dbReference type="UniPathway" id="UPA00109">
    <property type="reaction ID" value="UER00186"/>
</dbReference>
<dbReference type="Proteomes" id="UP000000645">
    <property type="component" value="Chromosome"/>
</dbReference>
<dbReference type="GO" id="GO:0004619">
    <property type="term" value="F:phosphoglycerate mutase activity"/>
    <property type="evidence" value="ECO:0007669"/>
    <property type="project" value="UniProtKB-EC"/>
</dbReference>
<dbReference type="GO" id="GO:0006094">
    <property type="term" value="P:gluconeogenesis"/>
    <property type="evidence" value="ECO:0007669"/>
    <property type="project" value="UniProtKB-UniRule"/>
</dbReference>
<dbReference type="GO" id="GO:0006096">
    <property type="term" value="P:glycolytic process"/>
    <property type="evidence" value="ECO:0007669"/>
    <property type="project" value="UniProtKB-UniRule"/>
</dbReference>
<dbReference type="CDD" id="cd07067">
    <property type="entry name" value="HP_PGM_like"/>
    <property type="match status" value="1"/>
</dbReference>
<dbReference type="FunFam" id="3.40.50.1240:FF:000003">
    <property type="entry name" value="2,3-bisphosphoglycerate-dependent phosphoglycerate mutase"/>
    <property type="match status" value="1"/>
</dbReference>
<dbReference type="Gene3D" id="3.40.50.1240">
    <property type="entry name" value="Phosphoglycerate mutase-like"/>
    <property type="match status" value="1"/>
</dbReference>
<dbReference type="HAMAP" id="MF_01039">
    <property type="entry name" value="PGAM_GpmA"/>
    <property type="match status" value="1"/>
</dbReference>
<dbReference type="InterPro" id="IPR013078">
    <property type="entry name" value="His_Pase_superF_clade-1"/>
</dbReference>
<dbReference type="InterPro" id="IPR029033">
    <property type="entry name" value="His_PPase_superfam"/>
</dbReference>
<dbReference type="InterPro" id="IPR001345">
    <property type="entry name" value="PG/BPGM_mutase_AS"/>
</dbReference>
<dbReference type="InterPro" id="IPR005952">
    <property type="entry name" value="Phosphogly_mut1"/>
</dbReference>
<dbReference type="NCBIfam" id="TIGR01258">
    <property type="entry name" value="pgm_1"/>
    <property type="match status" value="1"/>
</dbReference>
<dbReference type="NCBIfam" id="NF010713">
    <property type="entry name" value="PRK14115.1"/>
    <property type="match status" value="1"/>
</dbReference>
<dbReference type="PANTHER" id="PTHR11931">
    <property type="entry name" value="PHOSPHOGLYCERATE MUTASE"/>
    <property type="match status" value="1"/>
</dbReference>
<dbReference type="Pfam" id="PF00300">
    <property type="entry name" value="His_Phos_1"/>
    <property type="match status" value="1"/>
</dbReference>
<dbReference type="PIRSF" id="PIRSF000709">
    <property type="entry name" value="6PFK_2-Ptase"/>
    <property type="match status" value="1"/>
</dbReference>
<dbReference type="SMART" id="SM00855">
    <property type="entry name" value="PGAM"/>
    <property type="match status" value="1"/>
</dbReference>
<dbReference type="SUPFAM" id="SSF53254">
    <property type="entry name" value="Phosphoglycerate mutase-like"/>
    <property type="match status" value="1"/>
</dbReference>
<dbReference type="PROSITE" id="PS00175">
    <property type="entry name" value="PG_MUTASE"/>
    <property type="match status" value="1"/>
</dbReference>
<sequence>MHKLVLIRHGESTWNLENRFTGWTDVDLTPTGIEQAKNAGRLLKAEGYDFDLAYTSVLKRATRTLWHCLDEMDRTWLPVEHSWRLNERHYGALQGLNKADMAKQYGDAQVLVWRRSYDTPPPALEPTDPRCERGDIRYAGLAPEQVPLTECLKDTVARVLPYWNEAIAPTIRSGKRVLIAAHGNSIRALVKYLDGISDQDIVGLNIPNGIPLVYELDAELKPLRSYYLGDAEATAKAAAAVAAQGKA</sequence>
<keyword id="KW-0312">Gluconeogenesis</keyword>
<keyword id="KW-0324">Glycolysis</keyword>
<keyword id="KW-0413">Isomerase</keyword>
<organism>
    <name type="scientific">Acidovorax sp. (strain JS42)</name>
    <dbReference type="NCBI Taxonomy" id="232721"/>
    <lineage>
        <taxon>Bacteria</taxon>
        <taxon>Pseudomonadati</taxon>
        <taxon>Pseudomonadota</taxon>
        <taxon>Betaproteobacteria</taxon>
        <taxon>Burkholderiales</taxon>
        <taxon>Comamonadaceae</taxon>
        <taxon>Acidovorax</taxon>
    </lineage>
</organism>
<proteinExistence type="inferred from homology"/>
<evidence type="ECO:0000255" key="1">
    <source>
        <dbReference type="HAMAP-Rule" id="MF_01039"/>
    </source>
</evidence>
<name>GPMA_ACISJ</name>
<accession>A1WBJ3</accession>
<comment type="function">
    <text evidence="1">Catalyzes the interconversion of 2-phosphoglycerate and 3-phosphoglycerate.</text>
</comment>
<comment type="catalytic activity">
    <reaction evidence="1">
        <text>(2R)-2-phosphoglycerate = (2R)-3-phosphoglycerate</text>
        <dbReference type="Rhea" id="RHEA:15901"/>
        <dbReference type="ChEBI" id="CHEBI:58272"/>
        <dbReference type="ChEBI" id="CHEBI:58289"/>
        <dbReference type="EC" id="5.4.2.11"/>
    </reaction>
</comment>
<comment type="pathway">
    <text evidence="1">Carbohydrate degradation; glycolysis; pyruvate from D-glyceraldehyde 3-phosphate: step 3/5.</text>
</comment>
<comment type="subunit">
    <text evidence="1">Homodimer.</text>
</comment>
<comment type="similarity">
    <text evidence="1">Belongs to the phosphoglycerate mutase family. BPG-dependent PGAM subfamily.</text>
</comment>